<protein>
    <recommendedName>
        <fullName>Melanocyte protein PMEL</fullName>
    </recommendedName>
    <alternativeName>
        <fullName>Melanocyte protein Pmel 17</fullName>
    </alternativeName>
    <alternativeName>
        <fullName>Premelanosome protein</fullName>
    </alternativeName>
    <alternativeName>
        <fullName>Retinal pigment epithelial-specific protein</fullName>
    </alternativeName>
    <alternativeName>
        <fullName>Silver locus protein homolog</fullName>
    </alternativeName>
    <component>
        <recommendedName>
            <fullName>M-alpha</fullName>
        </recommendedName>
    </component>
    <component>
        <recommendedName>
            <fullName>M-beta</fullName>
        </recommendedName>
    </component>
</protein>
<comment type="function">
    <text evidence="2">Forms physiological amyloids that play a central role in melanosome morphogenesis and pigmentation. The maturation of unpigmented premelanosomes from stage I to II is marked by assembly of processed amyloidogenic fragments into parallel fibrillar sheets, which elongate the vesicle into a striated ellipsoidal shape. In pigmented stage III and IV melanosomes, the amyloid matrix serves as a platform where eumelanin precursors accumulate at high local concentrations for pigment formation. May prevent pigmentation-associated toxicity by sequestering toxic reaction intermediates of eumelanin biosynthesis pathway.</text>
</comment>
<comment type="subunit">
    <text evidence="2">Homodimer; disulfide-linked. Dimerization in the endoplasmic reticulum and early Golgi prevents premature fibril formation. The dimers are resolved to monomers in late- or post-Golgi compartments. Heterooligomer; amyloid-type. Processed amyloidogenic fragments assemble into fibrils that further organize into beta-sheet quaternary amyloid structures. Interacts (via luminal C-terminal fragment) with CD63; this is important for sorting of the luminal fragment in tetraspanin rich microdomains in stage I melanosomes to prevent premature lysosomal degradation. Interacts with APOE; this allows the loading of the luminal fragment on ILVs to induce fibril nucleation. Interacts with MLANA.</text>
</comment>
<comment type="subcellular location">
    <subcellularLocation>
        <location evidence="2">Endoplasmic reticulum membrane</location>
        <topology evidence="3">Single-pass type I membrane protein</topology>
    </subcellularLocation>
    <subcellularLocation>
        <location evidence="2">Golgi apparatus</location>
        <location evidence="2">cis-Golgi network membrane</location>
    </subcellularLocation>
    <subcellularLocation>
        <location evidence="2">Endosome</location>
        <location evidence="2">Multivesicular body</location>
    </subcellularLocation>
    <subcellularLocation>
        <location evidence="2">Melanosome</location>
    </subcellularLocation>
    <subcellularLocation>
        <location evidence="2">Extracellular vesicle</location>
    </subcellularLocation>
    <subcellularLocation>
        <location evidence="2">Secreted</location>
    </subcellularLocation>
    <text evidence="2">Identified by mass spectrometry in melanosome fractions from stage I to stage IV. Localizes predominantly to intralumenal vesicles (ILVs) within multivesicular bodies. Associates with ILVs found within the lumen of premelanosomes and melanosomes and particularly in compartments that serve as precursors to the striated stage II premelanosomes. Sorted to stage I melanosomes following its processing in the ER and cis-Golgi. Transiently expressed at the cell surface before targeting to early melanosomes. Colocalizes with BACE2 in stage I and II melanosomes. Colocalizes with CD63 at exosomes and in intraluminal vesicles within multivesicular endosomes.</text>
</comment>
<comment type="tissue specificity">
    <text evidence="6">Retinal pigment epithelium.</text>
</comment>
<comment type="domain">
    <text evidence="2">The core amyloid fragment (CAF) represents the amyloidogenic unit of melanosomal fibrils. It is predicted to form a beta-solenoid structure comprising four coil right-handed beta strands with Tyr-151 and Trp-160 residues pi-stacking against each other to confer stability.</text>
</comment>
<comment type="domain">
    <text evidence="2">The highly O-glycosylated repeat (RPT) domain drives the generation of the fibrillar amyloid sheet structures within melanosomes. The O-glycosylation sites rather than its primary amino acid sequence are conserved across species.</text>
</comment>
<comment type="domain">
    <text evidence="2">The Kringle-like domain (KLD) contains six highly conserved cysteine residues that are critical for dimer formation.</text>
</comment>
<comment type="PTM">
    <text evidence="2">N- and O-glycosylated. A small amount of P1/P100 (major form) undergoes glycosylation in ER and Golgi compartments to yield P2/P120 (minor form). The mature P2 form leaves the trans-Golgi network and is mainly targeted to stage I melanosomes via the plasma membrane and clathrin-mediated endocytosis. Stage II melanosomes harbor only Golgi-modified fragments that are derived from M-alpha and that bear sialylated O-linked oligosaccharides. O-glycosylation of the RPT region is a conserved feature likely involved in amyloid sheet separation via electrostatic repulsion.</text>
</comment>
<comment type="PTM">
    <text evidence="2">Undergoes multiple proteolytic processing. In a post-Golgi prelysosomal compartment, P2 is cleaved by a furin-like proprotein convertase (PC) into two disulfide-linked subunits: a large lumenal subunit, M-alpha/ME20-S, and an integral membrane subunit, M-beta. Despite cleavage, only a small fraction of M-alpha is secreted, as most M-alpha and M-beta remain associated with each other intracellularly via a disulfide bond. Once targeted to stage I melanosomes, beta-secretase BACE2 cleaves the M-beta fragment to release the amyloidogenic luminal fragment containing M-alpha and a small portion of M-beta N-terminus. M-alpha is further cleaved by metalloproteinases, likely ADAM10 or ADAM17, and still unknown proteases to yield subfragments that ultimately assemble into amyloid fibrils. The C-terminal fragment of M-beta is processed by the gamma-secretase complex to release a short intracytoplasmic domain.</text>
</comment>
<comment type="similarity">
    <text evidence="7">Belongs to the PMEL/NMB family.</text>
</comment>
<dbReference type="EMBL" id="EF065525">
    <property type="protein sequence ID" value="ABL86707.1"/>
    <property type="molecule type" value="mRNA"/>
</dbReference>
<dbReference type="EMBL" id="M81193">
    <property type="protein sequence ID" value="AAA30419.1"/>
    <property type="molecule type" value="mRNA"/>
</dbReference>
<dbReference type="PIR" id="A49179">
    <property type="entry name" value="A49179"/>
</dbReference>
<dbReference type="RefSeq" id="NP_001073684.2">
    <property type="nucleotide sequence ID" value="NM_001080215.2"/>
</dbReference>
<dbReference type="FunCoup" id="Q06154">
    <property type="interactions" value="338"/>
</dbReference>
<dbReference type="STRING" id="9913.ENSBTAP00000005250"/>
<dbReference type="GlyCosmos" id="Q06154">
    <property type="glycosylation" value="5 sites, No reported glycans"/>
</dbReference>
<dbReference type="GlyGen" id="Q06154">
    <property type="glycosylation" value="5 sites"/>
</dbReference>
<dbReference type="PaxDb" id="9913-ENSBTAP00000005250"/>
<dbReference type="GeneID" id="281487"/>
<dbReference type="KEGG" id="bta:281487"/>
<dbReference type="CTD" id="6490"/>
<dbReference type="eggNOG" id="ENOG502QV5K">
    <property type="taxonomic scope" value="Eukaryota"/>
</dbReference>
<dbReference type="InParanoid" id="Q06154"/>
<dbReference type="OrthoDB" id="9939762at2759"/>
<dbReference type="Proteomes" id="UP000009136">
    <property type="component" value="Unplaced"/>
</dbReference>
<dbReference type="GO" id="GO:0005789">
    <property type="term" value="C:endoplasmic reticulum membrane"/>
    <property type="evidence" value="ECO:0007669"/>
    <property type="project" value="UniProtKB-SubCell"/>
</dbReference>
<dbReference type="GO" id="GO:0070062">
    <property type="term" value="C:extracellular exosome"/>
    <property type="evidence" value="ECO:0000250"/>
    <property type="project" value="UniProtKB"/>
</dbReference>
<dbReference type="GO" id="GO:0005794">
    <property type="term" value="C:Golgi apparatus"/>
    <property type="evidence" value="ECO:0007669"/>
    <property type="project" value="UniProtKB-SubCell"/>
</dbReference>
<dbReference type="GO" id="GO:0042470">
    <property type="term" value="C:melanosome"/>
    <property type="evidence" value="ECO:0000318"/>
    <property type="project" value="GO_Central"/>
</dbReference>
<dbReference type="GO" id="GO:0097487">
    <property type="term" value="C:multivesicular body, internal vesicle"/>
    <property type="evidence" value="ECO:0000250"/>
    <property type="project" value="UniProtKB"/>
</dbReference>
<dbReference type="GO" id="GO:0005886">
    <property type="term" value="C:plasma membrane"/>
    <property type="evidence" value="ECO:0000318"/>
    <property type="project" value="GO_Central"/>
</dbReference>
<dbReference type="GO" id="GO:0042438">
    <property type="term" value="P:melanin biosynthetic process"/>
    <property type="evidence" value="ECO:0007669"/>
    <property type="project" value="UniProtKB-KW"/>
</dbReference>
<dbReference type="GO" id="GO:0032438">
    <property type="term" value="P:melanosome organization"/>
    <property type="evidence" value="ECO:0000318"/>
    <property type="project" value="GO_Central"/>
</dbReference>
<dbReference type="CDD" id="cd00146">
    <property type="entry name" value="PKD"/>
    <property type="match status" value="1"/>
</dbReference>
<dbReference type="Gene3D" id="2.60.40.10">
    <property type="entry name" value="Immunoglobulins"/>
    <property type="match status" value="1"/>
</dbReference>
<dbReference type="InterPro" id="IPR013783">
    <property type="entry name" value="Ig-like_fold"/>
</dbReference>
<dbReference type="InterPro" id="IPR045219">
    <property type="entry name" value="PKAT"/>
</dbReference>
<dbReference type="InterPro" id="IPR046846">
    <property type="entry name" value="PKAT_KLD"/>
</dbReference>
<dbReference type="InterPro" id="IPR022409">
    <property type="entry name" value="PKD/Chitinase_dom"/>
</dbReference>
<dbReference type="InterPro" id="IPR000601">
    <property type="entry name" value="PKD_dom"/>
</dbReference>
<dbReference type="InterPro" id="IPR035986">
    <property type="entry name" value="PKD_dom_sf"/>
</dbReference>
<dbReference type="PANTHER" id="PTHR11861:SF1">
    <property type="entry name" value="MELANOCYTE PROTEIN PMEL"/>
    <property type="match status" value="1"/>
</dbReference>
<dbReference type="PANTHER" id="PTHR11861">
    <property type="entry name" value="MELANOCYTE PROTEIN PMEL 17-RELATED"/>
    <property type="match status" value="1"/>
</dbReference>
<dbReference type="Pfam" id="PF20433">
    <property type="entry name" value="PKAT_KLD"/>
    <property type="match status" value="1"/>
</dbReference>
<dbReference type="Pfam" id="PF00801">
    <property type="entry name" value="PKD"/>
    <property type="match status" value="1"/>
</dbReference>
<dbReference type="SMART" id="SM00089">
    <property type="entry name" value="PKD"/>
    <property type="match status" value="1"/>
</dbReference>
<dbReference type="SUPFAM" id="SSF49299">
    <property type="entry name" value="PKD domain"/>
    <property type="match status" value="1"/>
</dbReference>
<dbReference type="PROSITE" id="PS50093">
    <property type="entry name" value="PKD"/>
    <property type="match status" value="1"/>
</dbReference>
<reference key="1">
    <citation type="submission" date="2006-10" db="EMBL/GenBank/DDBJ databases">
        <title>Investigation on the genetic background of coat color dilution in a Charolais x German Holstein F2 resource population.</title>
        <authorList>
            <person name="Kuehn C."/>
            <person name="Weikard R."/>
        </authorList>
    </citation>
    <scope>NUCLEOTIDE SEQUENCE [MRNA]</scope>
    <source>
        <tissue>Skin</tissue>
    </source>
</reference>
<reference key="2">
    <citation type="journal article" date="1992" name="Exp. Eye Res.">
        <title>The cDNA RPE1 and monoclonal antibody HMB-50 define gene products preferentially expressed in retinal pigment epithelium.</title>
        <authorList>
            <person name="Kim R.Y."/>
            <person name="Wistow G.J."/>
        </authorList>
    </citation>
    <scope>NUCLEOTIDE SEQUENCE [MRNA] OF 158-649</scope>
    <scope>TISSUE SPECIFICITY</scope>
    <source>
        <tissue>Retina</tissue>
    </source>
</reference>
<proteinExistence type="evidence at transcript level"/>
<evidence type="ECO:0000250" key="1"/>
<evidence type="ECO:0000250" key="2">
    <source>
        <dbReference type="UniProtKB" id="P40967"/>
    </source>
</evidence>
<evidence type="ECO:0000255" key="3"/>
<evidence type="ECO:0000255" key="4">
    <source>
        <dbReference type="PROSITE-ProRule" id="PRU00151"/>
    </source>
</evidence>
<evidence type="ECO:0000256" key="5">
    <source>
        <dbReference type="SAM" id="MobiDB-lite"/>
    </source>
</evidence>
<evidence type="ECO:0000269" key="6">
    <source>
    </source>
</evidence>
<evidence type="ECO:0000305" key="7"/>
<accession>Q06154</accession>
<accession>A1YKV3</accession>
<keyword id="KW-0165">Cleavage on pair of basic residues</keyword>
<keyword id="KW-1015">Disulfide bond</keyword>
<keyword id="KW-0256">Endoplasmic reticulum</keyword>
<keyword id="KW-0967">Endosome</keyword>
<keyword id="KW-0325">Glycoprotein</keyword>
<keyword id="KW-0333">Golgi apparatus</keyword>
<keyword id="KW-0470">Melanin biosynthesis</keyword>
<keyword id="KW-0472">Membrane</keyword>
<keyword id="KW-1185">Reference proteome</keyword>
<keyword id="KW-0677">Repeat</keyword>
<keyword id="KW-0964">Secreted</keyword>
<keyword id="KW-0730">Sialic acid</keyword>
<keyword id="KW-0732">Signal</keyword>
<keyword id="KW-0812">Transmembrane</keyword>
<keyword id="KW-1133">Transmembrane helix</keyword>
<feature type="signal peptide" evidence="1">
    <location>
        <begin position="1"/>
        <end position="24"/>
    </location>
</feature>
<feature type="chain" id="PRO_0000164647" description="Melanocyte protein PMEL">
    <location>
        <begin position="25"/>
        <end position="649"/>
    </location>
</feature>
<feature type="chain" id="PRO_0000386646" description="M-alpha" evidence="1">
    <location>
        <begin position="25"/>
        <end position="453"/>
    </location>
</feature>
<feature type="chain" id="PRO_0000386647" description="M-beta" evidence="1">
    <location>
        <begin position="456"/>
        <end position="649"/>
    </location>
</feature>
<feature type="topological domain" description="Lumenal" evidence="7">
    <location>
        <begin position="456"/>
        <end position="581"/>
    </location>
</feature>
<feature type="transmembrane region" description="Helical" evidence="3">
    <location>
        <begin position="582"/>
        <end position="602"/>
    </location>
</feature>
<feature type="topological domain" description="Cytoplasmic" evidence="7">
    <location>
        <begin position="603"/>
        <end position="649"/>
    </location>
</feature>
<feature type="domain" description="PKD" evidence="4">
    <location>
        <begin position="217"/>
        <end position="307"/>
    </location>
</feature>
<feature type="repeat" description="1" evidence="3">
    <location>
        <begin position="305"/>
        <end position="317"/>
    </location>
</feature>
<feature type="repeat" description="2" evidence="3">
    <location>
        <begin position="318"/>
        <end position="330"/>
    </location>
</feature>
<feature type="repeat" description="3" evidence="3">
    <location>
        <begin position="331"/>
        <end position="343"/>
    </location>
</feature>
<feature type="repeat" description="4" evidence="3">
    <location>
        <begin position="344"/>
        <end position="356"/>
    </location>
</feature>
<feature type="repeat" description="5" evidence="3">
    <location>
        <begin position="357"/>
        <end position="369"/>
    </location>
</feature>
<feature type="repeat" description="6" evidence="3">
    <location>
        <begin position="370"/>
        <end position="382"/>
    </location>
</feature>
<feature type="repeat" description="7" evidence="3">
    <location>
        <begin position="389"/>
        <end position="400"/>
    </location>
</feature>
<feature type="repeat" description="8" evidence="3">
    <location>
        <begin position="401"/>
        <end position="413"/>
    </location>
</feature>
<feature type="region of interest" description="Amyloidogenic unit" evidence="2">
    <location>
        <begin position="148"/>
        <end position="223"/>
    </location>
</feature>
<feature type="region of interest" description="Disordered" evidence="5">
    <location>
        <begin position="303"/>
        <end position="327"/>
    </location>
</feature>
<feature type="region of interest" description="8 X 13 AA approximate tandem repeats, RPT domain">
    <location>
        <begin position="305"/>
        <end position="413"/>
    </location>
</feature>
<feature type="region of interest" description="Disordered" evidence="5">
    <location>
        <begin position="381"/>
        <end position="438"/>
    </location>
</feature>
<feature type="region of interest" description="Kringle-like fold" evidence="2">
    <location>
        <begin position="502"/>
        <end position="552"/>
    </location>
</feature>
<feature type="compositionally biased region" description="Polar residues" evidence="5">
    <location>
        <begin position="390"/>
        <end position="406"/>
    </location>
</feature>
<feature type="compositionally biased region" description="Polar residues" evidence="5">
    <location>
        <begin position="424"/>
        <end position="438"/>
    </location>
</feature>
<feature type="site" description="Essential for fibril formation" evidence="2">
    <location>
        <position position="151"/>
    </location>
</feature>
<feature type="site" description="Essential for fibril formation" evidence="2">
    <location>
        <position position="160"/>
    </location>
</feature>
<feature type="site" description="Cleavage; by furin-like proprotein convertase" evidence="2">
    <location>
        <begin position="455"/>
        <end position="456"/>
    </location>
</feature>
<feature type="site" description="Cleavage; by ADAM metalloproteinases" evidence="2">
    <location>
        <begin position="569"/>
        <end position="570"/>
    </location>
</feature>
<feature type="site" description="Endocytosis signal" evidence="2">
    <location>
        <begin position="643"/>
        <end position="644"/>
    </location>
</feature>
<feature type="site" description="ER exit signal" evidence="2">
    <location>
        <position position="649"/>
    </location>
</feature>
<feature type="glycosylation site" description="N-linked (GlcNAc...) asparagine" evidence="3">
    <location>
        <position position="81"/>
    </location>
</feature>
<feature type="glycosylation site" description="N-linked (GlcNAc...) asparagine" evidence="3">
    <location>
        <position position="106"/>
    </location>
</feature>
<feature type="glycosylation site" description="N-linked (GlcNAc...) asparagine" evidence="3">
    <location>
        <position position="111"/>
    </location>
</feature>
<feature type="glycosylation site" description="N-linked (GlcNAc...) asparagine" evidence="3">
    <location>
        <position position="426"/>
    </location>
</feature>
<feature type="glycosylation site" description="N-linked (GlcNAc...) asparagine" evidence="3">
    <location>
        <position position="554"/>
    </location>
</feature>
<feature type="disulfide bond" description="Interchain (in monomeric form)" evidence="2">
    <location>
        <begin position="301"/>
        <end status="unknown"/>
    </location>
</feature>
<feature type="disulfide bond" description="Intrachain (in dimeric form)" evidence="2">
    <location>
        <begin position="301"/>
        <end status="unknown"/>
    </location>
</feature>
<feature type="sequence conflict" description="In Ref. 2; AAA30419." evidence="7" ref="2">
    <original>R</original>
    <variation>T</variation>
    <location>
        <position position="394"/>
    </location>
</feature>
<feature type="sequence conflict" description="In Ref. 2; AAA30419." evidence="7" ref="2">
    <original>QG</original>
    <variation>S</variation>
    <location>
        <begin position="477"/>
        <end position="478"/>
    </location>
</feature>
<feature type="sequence conflict" description="In Ref. 2; AAA30419." evidence="7" ref="2">
    <original>A</original>
    <variation>E</variation>
    <location>
        <position position="612"/>
    </location>
</feature>
<gene>
    <name type="primary">PMEL</name>
    <name type="synonym">PMEL17</name>
    <name type="synonym">RPE1</name>
    <name type="synonym">SILV</name>
</gene>
<name>PMEL_BOVIN</name>
<sequence length="649" mass="69366">MDLVLRKYLLHVALMGVLLAVGTTEGPRDRDWLGVSRQLRIKAWNRQLYPEWTESQGPDCWRGGHISLKVSNDGPTLIGANASFSIALHFPKSQKVLPDGQVIWANNTIINGSQVWGGQLVYPQEPDDTCIFPDGEPCPSGPLSQKRCFVYVWKTWDQYWQVLGGPVSGLSIGTDKAMLGTYNMEVTVYHRRGSQSYVPLAHSSSAFTITDQVPFSVSVSQLQALDGRNKRFLRKQPLTFALQLHDPSGYLAGADLSYTWDFGDSTGTLISRALTVTHTYLESGPVTAQVVLQAAIPLTSCGSSPVPGTTDRHVTTAEAPGTTAGQVPTTEVMGTTPGQVPTAEAPGTTVGWVPTTEDVGTTPEQVATSKVLSTTPVEMPTAKATGRTPEVSTREPSGTTVTQGTTPELVETTAGEVSTPEPAGSNTSSFMPTEGTAGSLSPLPDDTATLVLEKRQAPLDCVLYRYGSFSLTLDIVQGIESAEILQAVSSSEGDAFELTVSCQGGLPKEACMDISSPGCQLPAQRLCQPVPPSPACQLVLHQVLKGGSGTYCLNVSLADANSLAMVSTQLVMPGQEAGLRQAPLFVGILLVLTALLLASLIYRRRLMKQGSAVPLPQLPHGRTQWLRLPWVFRSCPIGESKPLLSGQQV</sequence>
<organism>
    <name type="scientific">Bos taurus</name>
    <name type="common">Bovine</name>
    <dbReference type="NCBI Taxonomy" id="9913"/>
    <lineage>
        <taxon>Eukaryota</taxon>
        <taxon>Metazoa</taxon>
        <taxon>Chordata</taxon>
        <taxon>Craniata</taxon>
        <taxon>Vertebrata</taxon>
        <taxon>Euteleostomi</taxon>
        <taxon>Mammalia</taxon>
        <taxon>Eutheria</taxon>
        <taxon>Laurasiatheria</taxon>
        <taxon>Artiodactyla</taxon>
        <taxon>Ruminantia</taxon>
        <taxon>Pecora</taxon>
        <taxon>Bovidae</taxon>
        <taxon>Bovinae</taxon>
        <taxon>Bos</taxon>
    </lineage>
</organism>